<sequence length="64" mass="7231">KDGYIIEHRGCKYSCFFGSSSWCNKECTLKKGSSGYCAWPACWCYGLPDSVKIFDSNNNKCSKK</sequence>
<feature type="chain" id="PRO_0000456090" description="Toxin Tce3">
    <location>
        <begin position="1"/>
        <end position="64"/>
    </location>
</feature>
<feature type="domain" description="LCN-type CS-alpha/beta" evidence="3">
    <location>
        <begin position="1"/>
        <end position="62"/>
    </location>
</feature>
<feature type="disulfide bond" evidence="3">
    <location>
        <begin position="11"/>
        <end position="61"/>
    </location>
</feature>
<feature type="disulfide bond" evidence="3">
    <location>
        <begin position="15"/>
        <end position="37"/>
    </location>
</feature>
<feature type="disulfide bond" evidence="3">
    <location>
        <begin position="23"/>
        <end position="42"/>
    </location>
</feature>
<feature type="disulfide bond" evidence="3">
    <location>
        <begin position="27"/>
        <end position="44"/>
    </location>
</feature>
<organism evidence="5">
    <name type="scientific">Tityus cerroazul</name>
    <name type="common">Scorpion</name>
    <dbReference type="NCBI Taxonomy" id="2684170"/>
    <lineage>
        <taxon>Eukaryota</taxon>
        <taxon>Metazoa</taxon>
        <taxon>Ecdysozoa</taxon>
        <taxon>Arthropoda</taxon>
        <taxon>Chelicerata</taxon>
        <taxon>Arachnida</taxon>
        <taxon>Scorpiones</taxon>
        <taxon>Buthida</taxon>
        <taxon>Buthoidea</taxon>
        <taxon>Buthidae</taxon>
        <taxon>Tityus</taxon>
    </lineage>
</organism>
<protein>
    <recommendedName>
        <fullName evidence="5">Toxin Tce3</fullName>
    </recommendedName>
</protein>
<dbReference type="SMR" id="C0HLZ2"/>
<dbReference type="GO" id="GO:0005576">
    <property type="term" value="C:extracellular region"/>
    <property type="evidence" value="ECO:0000314"/>
    <property type="project" value="UniProtKB"/>
</dbReference>
<dbReference type="GO" id="GO:0019871">
    <property type="term" value="F:sodium channel inhibitor activity"/>
    <property type="evidence" value="ECO:0007669"/>
    <property type="project" value="InterPro"/>
</dbReference>
<dbReference type="GO" id="GO:0090729">
    <property type="term" value="F:toxin activity"/>
    <property type="evidence" value="ECO:0007669"/>
    <property type="project" value="UniProtKB-KW"/>
</dbReference>
<dbReference type="GO" id="GO:0006952">
    <property type="term" value="P:defense response"/>
    <property type="evidence" value="ECO:0007669"/>
    <property type="project" value="InterPro"/>
</dbReference>
<dbReference type="CDD" id="cd23106">
    <property type="entry name" value="neurotoxins_LC_scorpion"/>
    <property type="match status" value="1"/>
</dbReference>
<dbReference type="FunFam" id="3.30.30.10:FF:000002">
    <property type="entry name" value="Alpha-like toxin BmK-M1"/>
    <property type="match status" value="1"/>
</dbReference>
<dbReference type="Gene3D" id="3.30.30.10">
    <property type="entry name" value="Knottin, scorpion toxin-like"/>
    <property type="match status" value="1"/>
</dbReference>
<dbReference type="InterPro" id="IPR044062">
    <property type="entry name" value="LCN-type_CS_alpha_beta_dom"/>
</dbReference>
<dbReference type="InterPro" id="IPR003614">
    <property type="entry name" value="Scorpion_toxin-like"/>
</dbReference>
<dbReference type="InterPro" id="IPR036574">
    <property type="entry name" value="Scorpion_toxin-like_sf"/>
</dbReference>
<dbReference type="InterPro" id="IPR018218">
    <property type="entry name" value="Scorpion_toxinL"/>
</dbReference>
<dbReference type="InterPro" id="IPR002061">
    <property type="entry name" value="Scorpion_toxinL/defensin"/>
</dbReference>
<dbReference type="Pfam" id="PF00537">
    <property type="entry name" value="Toxin_3"/>
    <property type="match status" value="1"/>
</dbReference>
<dbReference type="PRINTS" id="PR00285">
    <property type="entry name" value="SCORPNTOXIN"/>
</dbReference>
<dbReference type="SMART" id="SM00505">
    <property type="entry name" value="Knot1"/>
    <property type="match status" value="1"/>
</dbReference>
<dbReference type="SUPFAM" id="SSF57095">
    <property type="entry name" value="Scorpion toxin-like"/>
    <property type="match status" value="1"/>
</dbReference>
<dbReference type="PROSITE" id="PS51863">
    <property type="entry name" value="LCN_CSAB"/>
    <property type="match status" value="1"/>
</dbReference>
<evidence type="ECO:0000250" key="1">
    <source>
        <dbReference type="UniProtKB" id="P0C1X7"/>
    </source>
</evidence>
<evidence type="ECO:0000250" key="2">
    <source>
        <dbReference type="UniProtKB" id="P0CF39"/>
    </source>
</evidence>
<evidence type="ECO:0000255" key="3">
    <source>
        <dbReference type="PROSITE-ProRule" id="PRU01210"/>
    </source>
</evidence>
<evidence type="ECO:0000269" key="4">
    <source>
    </source>
</evidence>
<evidence type="ECO:0000303" key="5">
    <source>
    </source>
</evidence>
<evidence type="ECO:0000305" key="6"/>
<accession>C0HLZ2</accession>
<name>SCNA1_TITCE</name>
<reference evidence="6" key="1">
    <citation type="journal article" date="2022" name="Toxicon X">
        <title>Heterologous expression of four recombinant toxins from Panamanian scorpions of the genus Tityus and Centruroides for production of antivenom.</title>
        <authorList>
            <person name="Salazar M.H."/>
            <person name="Clement H."/>
            <person name="Corrales-Garcia L.L."/>
            <person name="Sanchez J."/>
            <person name="Cleghorn J."/>
            <person name="Zamudio F."/>
            <person name="Possani L.D."/>
            <person name="Acosta H."/>
            <person name="Corzo G."/>
        </authorList>
    </citation>
    <scope>NUCLEOTIDE SEQUENCE [MRNA]</scope>
    <scope>PROTEIN SEQUENCE OF 1-25</scope>
    <scope>SUBCELLULAR LOCATION</scope>
    <scope>TISSUE SPECIFICITY</scope>
    <scope>MASS SPECTROMETRY</scope>
    <source>
        <tissue>Venom</tissue>
        <tissue evidence="5">Venom gland</tissue>
    </source>
</reference>
<comment type="function">
    <text evidence="1 2">Inhibits the sodium (Nav) currents in an apparent irreversible manner (By similarity). Produces small depolarization and induces repetitive firing in squid axons (By similarity). Is specific for arthropods (crickets, triatomides, crabs and squids), but is non-toxic to mice (By similarity). Shows antibacterial activity against both Gram-positive and Gram-negative bacteria (By similarity).</text>
</comment>
<comment type="subcellular location">
    <subcellularLocation>
        <location evidence="4">Secreted</location>
    </subcellularLocation>
</comment>
<comment type="tissue specificity">
    <text evidence="4">Expressed by the venom gland.</text>
</comment>
<comment type="domain">
    <text evidence="6">Has the structural arrangement of an alpha-helix connected to antiparallel beta-sheets by disulfide bonds (CS-alpha/beta).</text>
</comment>
<comment type="mass spectrometry" mass="6966.9" method="Electrospray" evidence="4">
    <text>Average mass.</text>
</comment>
<comment type="similarity">
    <text evidence="6">Belongs to the long (4 C-C) scorpion toxin superfamily. Sodium channel inhibitor family. Beta subfamily.</text>
</comment>
<keyword id="KW-0903">Direct protein sequencing</keyword>
<keyword id="KW-1015">Disulfide bond</keyword>
<keyword id="KW-0872">Ion channel impairing toxin</keyword>
<keyword id="KW-0528">Neurotoxin</keyword>
<keyword id="KW-0964">Secreted</keyword>
<keyword id="KW-0800">Toxin</keyword>
<keyword id="KW-0738">Voltage-gated sodium channel impairing toxin</keyword>
<proteinExistence type="evidence at protein level"/>